<keyword id="KW-0450">Lipoyl</keyword>
<keyword id="KW-0496">Mitochondrion</keyword>
<keyword id="KW-1185">Reference proteome</keyword>
<keyword id="KW-0809">Transit peptide</keyword>
<organism>
    <name type="scientific">Dictyostelium discoideum</name>
    <name type="common">Social amoeba</name>
    <dbReference type="NCBI Taxonomy" id="44689"/>
    <lineage>
        <taxon>Eukaryota</taxon>
        <taxon>Amoebozoa</taxon>
        <taxon>Evosea</taxon>
        <taxon>Eumycetozoa</taxon>
        <taxon>Dictyostelia</taxon>
        <taxon>Dictyosteliales</taxon>
        <taxon>Dictyosteliaceae</taxon>
        <taxon>Dictyostelium</taxon>
    </lineage>
</organism>
<dbReference type="EMBL" id="AAFI02000104">
    <property type="protein sequence ID" value="EAL63533.1"/>
    <property type="molecule type" value="Genomic_DNA"/>
</dbReference>
<dbReference type="RefSeq" id="XP_637044.1">
    <property type="nucleotide sequence ID" value="XM_631952.1"/>
</dbReference>
<dbReference type="SMR" id="Q54JV8"/>
<dbReference type="FunCoup" id="Q54JV8">
    <property type="interactions" value="491"/>
</dbReference>
<dbReference type="STRING" id="44689.Q54JV8"/>
<dbReference type="PaxDb" id="44689-DDB0231211"/>
<dbReference type="EnsemblProtists" id="EAL63533">
    <property type="protein sequence ID" value="EAL63533"/>
    <property type="gene ID" value="DDB_G0287773"/>
</dbReference>
<dbReference type="GeneID" id="8626298"/>
<dbReference type="KEGG" id="ddi:DDB_G0287773"/>
<dbReference type="dictyBase" id="DDB_G0287773">
    <property type="gene designation" value="gcvH1"/>
</dbReference>
<dbReference type="VEuPathDB" id="AmoebaDB:DDB_G0287773"/>
<dbReference type="eggNOG" id="KOG3373">
    <property type="taxonomic scope" value="Eukaryota"/>
</dbReference>
<dbReference type="HOGENOM" id="CLU_097408_2_0_1"/>
<dbReference type="InParanoid" id="Q54JV8"/>
<dbReference type="OMA" id="HEWVEMV"/>
<dbReference type="PhylomeDB" id="Q54JV8"/>
<dbReference type="PRO" id="PR:Q54JV8"/>
<dbReference type="Proteomes" id="UP000002195">
    <property type="component" value="Chromosome 5"/>
</dbReference>
<dbReference type="GO" id="GO:0005960">
    <property type="term" value="C:glycine cleavage complex"/>
    <property type="evidence" value="ECO:0000318"/>
    <property type="project" value="GO_Central"/>
</dbReference>
<dbReference type="GO" id="GO:0005739">
    <property type="term" value="C:mitochondrion"/>
    <property type="evidence" value="ECO:0000314"/>
    <property type="project" value="dictyBase"/>
</dbReference>
<dbReference type="GO" id="GO:0019464">
    <property type="term" value="P:glycine decarboxylation via glycine cleavage system"/>
    <property type="evidence" value="ECO:0000315"/>
    <property type="project" value="dictyBase"/>
</dbReference>
<dbReference type="CDD" id="cd06848">
    <property type="entry name" value="GCS_H"/>
    <property type="match status" value="1"/>
</dbReference>
<dbReference type="Gene3D" id="2.40.50.100">
    <property type="match status" value="1"/>
</dbReference>
<dbReference type="HAMAP" id="MF_00272">
    <property type="entry name" value="GcvH"/>
    <property type="match status" value="1"/>
</dbReference>
<dbReference type="InterPro" id="IPR003016">
    <property type="entry name" value="2-oxoA_DH_lipoyl-BS"/>
</dbReference>
<dbReference type="InterPro" id="IPR000089">
    <property type="entry name" value="Biotin_lipoyl"/>
</dbReference>
<dbReference type="InterPro" id="IPR002930">
    <property type="entry name" value="GCV_H"/>
</dbReference>
<dbReference type="InterPro" id="IPR033753">
    <property type="entry name" value="GCV_H/Fam206"/>
</dbReference>
<dbReference type="InterPro" id="IPR017453">
    <property type="entry name" value="GCV_H_sub"/>
</dbReference>
<dbReference type="InterPro" id="IPR011053">
    <property type="entry name" value="Single_hybrid_motif"/>
</dbReference>
<dbReference type="NCBIfam" id="TIGR00527">
    <property type="entry name" value="gcvH"/>
    <property type="match status" value="1"/>
</dbReference>
<dbReference type="NCBIfam" id="NF002270">
    <property type="entry name" value="PRK01202.1"/>
    <property type="match status" value="1"/>
</dbReference>
<dbReference type="PANTHER" id="PTHR11715">
    <property type="entry name" value="GLYCINE CLEAVAGE SYSTEM H PROTEIN"/>
    <property type="match status" value="1"/>
</dbReference>
<dbReference type="PANTHER" id="PTHR11715:SF3">
    <property type="entry name" value="GLYCINE CLEAVAGE SYSTEM H PROTEIN-RELATED"/>
    <property type="match status" value="1"/>
</dbReference>
<dbReference type="Pfam" id="PF01597">
    <property type="entry name" value="GCV_H"/>
    <property type="match status" value="1"/>
</dbReference>
<dbReference type="SUPFAM" id="SSF51230">
    <property type="entry name" value="Single hybrid motif"/>
    <property type="match status" value="1"/>
</dbReference>
<dbReference type="PROSITE" id="PS50968">
    <property type="entry name" value="BIOTINYL_LIPOYL"/>
    <property type="match status" value="1"/>
</dbReference>
<dbReference type="PROSITE" id="PS00189">
    <property type="entry name" value="LIPOYL"/>
    <property type="match status" value="1"/>
</dbReference>
<evidence type="ECO:0000250" key="1"/>
<evidence type="ECO:0000255" key="2"/>
<evidence type="ECO:0000255" key="3">
    <source>
        <dbReference type="PROSITE-ProRule" id="PRU01066"/>
    </source>
</evidence>
<evidence type="ECO:0000305" key="4"/>
<reference key="1">
    <citation type="journal article" date="2005" name="Nature">
        <title>The genome of the social amoeba Dictyostelium discoideum.</title>
        <authorList>
            <person name="Eichinger L."/>
            <person name="Pachebat J.A."/>
            <person name="Gloeckner G."/>
            <person name="Rajandream M.A."/>
            <person name="Sucgang R."/>
            <person name="Berriman M."/>
            <person name="Song J."/>
            <person name="Olsen R."/>
            <person name="Szafranski K."/>
            <person name="Xu Q."/>
            <person name="Tunggal B."/>
            <person name="Kummerfeld S."/>
            <person name="Madera M."/>
            <person name="Konfortov B.A."/>
            <person name="Rivero F."/>
            <person name="Bankier A.T."/>
            <person name="Lehmann R."/>
            <person name="Hamlin N."/>
            <person name="Davies R."/>
            <person name="Gaudet P."/>
            <person name="Fey P."/>
            <person name="Pilcher K."/>
            <person name="Chen G."/>
            <person name="Saunders D."/>
            <person name="Sodergren E.J."/>
            <person name="Davis P."/>
            <person name="Kerhornou A."/>
            <person name="Nie X."/>
            <person name="Hall N."/>
            <person name="Anjard C."/>
            <person name="Hemphill L."/>
            <person name="Bason N."/>
            <person name="Farbrother P."/>
            <person name="Desany B."/>
            <person name="Just E."/>
            <person name="Morio T."/>
            <person name="Rost R."/>
            <person name="Churcher C.M."/>
            <person name="Cooper J."/>
            <person name="Haydock S."/>
            <person name="van Driessche N."/>
            <person name="Cronin A."/>
            <person name="Goodhead I."/>
            <person name="Muzny D.M."/>
            <person name="Mourier T."/>
            <person name="Pain A."/>
            <person name="Lu M."/>
            <person name="Harper D."/>
            <person name="Lindsay R."/>
            <person name="Hauser H."/>
            <person name="James K.D."/>
            <person name="Quiles M."/>
            <person name="Madan Babu M."/>
            <person name="Saito T."/>
            <person name="Buchrieser C."/>
            <person name="Wardroper A."/>
            <person name="Felder M."/>
            <person name="Thangavelu M."/>
            <person name="Johnson D."/>
            <person name="Knights A."/>
            <person name="Loulseged H."/>
            <person name="Mungall K.L."/>
            <person name="Oliver K."/>
            <person name="Price C."/>
            <person name="Quail M.A."/>
            <person name="Urushihara H."/>
            <person name="Hernandez J."/>
            <person name="Rabbinowitsch E."/>
            <person name="Steffen D."/>
            <person name="Sanders M."/>
            <person name="Ma J."/>
            <person name="Kohara Y."/>
            <person name="Sharp S."/>
            <person name="Simmonds M.N."/>
            <person name="Spiegler S."/>
            <person name="Tivey A."/>
            <person name="Sugano S."/>
            <person name="White B."/>
            <person name="Walker D."/>
            <person name="Woodward J.R."/>
            <person name="Winckler T."/>
            <person name="Tanaka Y."/>
            <person name="Shaulsky G."/>
            <person name="Schleicher M."/>
            <person name="Weinstock G.M."/>
            <person name="Rosenthal A."/>
            <person name="Cox E.C."/>
            <person name="Chisholm R.L."/>
            <person name="Gibbs R.A."/>
            <person name="Loomis W.F."/>
            <person name="Platzer M."/>
            <person name="Kay R.R."/>
            <person name="Williams J.G."/>
            <person name="Dear P.H."/>
            <person name="Noegel A.A."/>
            <person name="Barrell B.G."/>
            <person name="Kuspa A."/>
        </authorList>
    </citation>
    <scope>NUCLEOTIDE SEQUENCE [LARGE SCALE GENOMIC DNA]</scope>
    <source>
        <strain>AX4</strain>
    </source>
</reference>
<proteinExistence type="inferred from homology"/>
<feature type="transit peptide" description="Mitochondrion" evidence="2">
    <location>
        <begin position="1"/>
        <end position="30"/>
    </location>
</feature>
<feature type="chain" id="PRO_0000328547" description="Probable glycine cleavage system H protein 1, mitochondrial">
    <location>
        <begin position="31"/>
        <end position="146"/>
    </location>
</feature>
<feature type="domain" description="Lipoyl-binding" evidence="3">
    <location>
        <begin position="41"/>
        <end position="123"/>
    </location>
</feature>
<feature type="modified residue" description="N6-lipoyllysine" evidence="1 3">
    <location>
        <position position="82"/>
    </location>
</feature>
<name>GCSH1_DICDI</name>
<accession>Q54JV8</accession>
<comment type="function">
    <text evidence="1">The glycine cleavage system catalyzes the degradation of glycine. The H protein shuttles the methylamine group of glycine from the P protein to the T protein (By similarity).</text>
</comment>
<comment type="cofactor">
    <cofactor evidence="1">
        <name>(R)-lipoate</name>
        <dbReference type="ChEBI" id="CHEBI:83088"/>
    </cofactor>
    <text evidence="1">Binds 1 lipoyl cofactor covalently.</text>
</comment>
<comment type="subunit">
    <text evidence="1">The glycine cleavage system is composed of four proteins: P, T, L and H.</text>
</comment>
<comment type="subcellular location">
    <subcellularLocation>
        <location evidence="4">Mitochondrion</location>
    </subcellularLocation>
</comment>
<comment type="similarity">
    <text evidence="4">Belongs to the GcvH family.</text>
</comment>
<sequence>MLKTLRFGTRAFGQNLNIAKRNFCTRYTNDHEWVTSLGSQNYRLGITDFAQKQLGDIVFVEIPQIGATLSQGQPITVVESVKAASDIYIPMDGSITTVNQELESSPELVNEEPMGDGWIVEYKSSKTDQFQSLMNKAQYDEYIKEH</sequence>
<gene>
    <name type="primary">gcvH1</name>
    <name type="synonym">gcvH</name>
    <name type="ORF">DDB_G0287773</name>
</gene>
<protein>
    <recommendedName>
        <fullName>Probable glycine cleavage system H protein 1, mitochondrial</fullName>
    </recommendedName>
</protein>